<protein>
    <recommendedName>
        <fullName evidence="1">Protein nucleotidyltransferase YdiU</fullName>
        <ecNumber evidence="1">2.7.7.-</ecNumber>
    </recommendedName>
    <alternativeName>
        <fullName evidence="1">Protein adenylyltransferase YdiU</fullName>
        <ecNumber evidence="1">2.7.7.108</ecNumber>
    </alternativeName>
    <alternativeName>
        <fullName evidence="1">Protein uridylyltransferase YdiU</fullName>
        <ecNumber evidence="1">2.7.7.-</ecNumber>
    </alternativeName>
</protein>
<gene>
    <name evidence="1" type="primary">ydiU</name>
    <name evidence="1" type="synonym">selO</name>
    <name type="ordered locus">Pcar_0297</name>
</gene>
<proteinExistence type="inferred from homology"/>
<dbReference type="EC" id="2.7.7.-" evidence="1"/>
<dbReference type="EC" id="2.7.7.108" evidence="1"/>
<dbReference type="EMBL" id="CP000142">
    <property type="protein sequence ID" value="ABA87557.1"/>
    <property type="molecule type" value="Genomic_DNA"/>
</dbReference>
<dbReference type="RefSeq" id="WP_011339970.1">
    <property type="nucleotide sequence ID" value="NC_007498.2"/>
</dbReference>
<dbReference type="SMR" id="Q3A7T7"/>
<dbReference type="STRING" id="338963.Pcar_0297"/>
<dbReference type="KEGG" id="pca:Pcar_0297"/>
<dbReference type="eggNOG" id="COG0397">
    <property type="taxonomic scope" value="Bacteria"/>
</dbReference>
<dbReference type="HOGENOM" id="CLU_010245_4_0_7"/>
<dbReference type="OrthoDB" id="9776281at2"/>
<dbReference type="Proteomes" id="UP000002534">
    <property type="component" value="Chromosome"/>
</dbReference>
<dbReference type="GO" id="GO:0070733">
    <property type="term" value="F:AMPylase activity"/>
    <property type="evidence" value="ECO:0007669"/>
    <property type="project" value="RHEA"/>
</dbReference>
<dbReference type="GO" id="GO:0005524">
    <property type="term" value="F:ATP binding"/>
    <property type="evidence" value="ECO:0007669"/>
    <property type="project" value="UniProtKB-UniRule"/>
</dbReference>
<dbReference type="GO" id="GO:0000287">
    <property type="term" value="F:magnesium ion binding"/>
    <property type="evidence" value="ECO:0007669"/>
    <property type="project" value="UniProtKB-UniRule"/>
</dbReference>
<dbReference type="HAMAP" id="MF_00692">
    <property type="entry name" value="YdiU_SelO"/>
    <property type="match status" value="1"/>
</dbReference>
<dbReference type="InterPro" id="IPR003846">
    <property type="entry name" value="SelO"/>
</dbReference>
<dbReference type="NCBIfam" id="NF000658">
    <property type="entry name" value="PRK00029.1"/>
    <property type="match status" value="1"/>
</dbReference>
<dbReference type="PANTHER" id="PTHR32057">
    <property type="entry name" value="PROTEIN ADENYLYLTRANSFERASE SELO, MITOCHONDRIAL"/>
    <property type="match status" value="1"/>
</dbReference>
<dbReference type="PANTHER" id="PTHR32057:SF14">
    <property type="entry name" value="PROTEIN ADENYLYLTRANSFERASE SELO, MITOCHONDRIAL"/>
    <property type="match status" value="1"/>
</dbReference>
<dbReference type="Pfam" id="PF02696">
    <property type="entry name" value="SelO"/>
    <property type="match status" value="1"/>
</dbReference>
<feature type="chain" id="PRO_0000271841" description="Protein nucleotidyltransferase YdiU">
    <location>
        <begin position="1"/>
        <end position="492"/>
    </location>
</feature>
<feature type="region of interest" description="Disordered" evidence="2">
    <location>
        <begin position="466"/>
        <end position="492"/>
    </location>
</feature>
<feature type="compositionally biased region" description="Basic and acidic residues" evidence="2">
    <location>
        <begin position="466"/>
        <end position="475"/>
    </location>
</feature>
<feature type="active site" description="Proton acceptor" evidence="1">
    <location>
        <position position="257"/>
    </location>
</feature>
<feature type="binding site" evidence="1">
    <location>
        <position position="95"/>
    </location>
    <ligand>
        <name>ATP</name>
        <dbReference type="ChEBI" id="CHEBI:30616"/>
    </ligand>
</feature>
<feature type="binding site" evidence="1">
    <location>
        <position position="97"/>
    </location>
    <ligand>
        <name>ATP</name>
        <dbReference type="ChEBI" id="CHEBI:30616"/>
    </ligand>
</feature>
<feature type="binding site" evidence="1">
    <location>
        <position position="98"/>
    </location>
    <ligand>
        <name>ATP</name>
        <dbReference type="ChEBI" id="CHEBI:30616"/>
    </ligand>
</feature>
<feature type="binding site" evidence="1">
    <location>
        <position position="118"/>
    </location>
    <ligand>
        <name>ATP</name>
        <dbReference type="ChEBI" id="CHEBI:30616"/>
    </ligand>
</feature>
<feature type="binding site" evidence="1">
    <location>
        <position position="130"/>
    </location>
    <ligand>
        <name>ATP</name>
        <dbReference type="ChEBI" id="CHEBI:30616"/>
    </ligand>
</feature>
<feature type="binding site" evidence="1">
    <location>
        <position position="131"/>
    </location>
    <ligand>
        <name>ATP</name>
        <dbReference type="ChEBI" id="CHEBI:30616"/>
    </ligand>
</feature>
<feature type="binding site" evidence="1">
    <location>
        <position position="181"/>
    </location>
    <ligand>
        <name>ATP</name>
        <dbReference type="ChEBI" id="CHEBI:30616"/>
    </ligand>
</feature>
<feature type="binding site" evidence="1">
    <location>
        <position position="188"/>
    </location>
    <ligand>
        <name>ATP</name>
        <dbReference type="ChEBI" id="CHEBI:30616"/>
    </ligand>
</feature>
<feature type="binding site" evidence="1">
    <location>
        <position position="258"/>
    </location>
    <ligand>
        <name>Mg(2+)</name>
        <dbReference type="ChEBI" id="CHEBI:18420"/>
    </ligand>
</feature>
<feature type="binding site" evidence="1">
    <location>
        <position position="267"/>
    </location>
    <ligand>
        <name>ATP</name>
        <dbReference type="ChEBI" id="CHEBI:30616"/>
    </ligand>
</feature>
<feature type="binding site" evidence="1">
    <location>
        <position position="267"/>
    </location>
    <ligand>
        <name>Mg(2+)</name>
        <dbReference type="ChEBI" id="CHEBI:18420"/>
    </ligand>
</feature>
<organism>
    <name type="scientific">Syntrophotalea carbinolica (strain DSM 2380 / NBRC 103641 / GraBd1)</name>
    <name type="common">Pelobacter carbinolicus</name>
    <dbReference type="NCBI Taxonomy" id="338963"/>
    <lineage>
        <taxon>Bacteria</taxon>
        <taxon>Pseudomonadati</taxon>
        <taxon>Thermodesulfobacteriota</taxon>
        <taxon>Desulfuromonadia</taxon>
        <taxon>Desulfuromonadales</taxon>
        <taxon>Syntrophotaleaceae</taxon>
        <taxon>Syntrophotalea</taxon>
    </lineage>
</organism>
<evidence type="ECO:0000255" key="1">
    <source>
        <dbReference type="HAMAP-Rule" id="MF_00692"/>
    </source>
</evidence>
<evidence type="ECO:0000256" key="2">
    <source>
        <dbReference type="SAM" id="MobiDB-lite"/>
    </source>
</evidence>
<name>SELO_SYNC1</name>
<keyword id="KW-0067">ATP-binding</keyword>
<keyword id="KW-0460">Magnesium</keyword>
<keyword id="KW-0464">Manganese</keyword>
<keyword id="KW-0479">Metal-binding</keyword>
<keyword id="KW-0547">Nucleotide-binding</keyword>
<keyword id="KW-0548">Nucleotidyltransferase</keyword>
<keyword id="KW-1185">Reference proteome</keyword>
<keyword id="KW-0808">Transferase</keyword>
<comment type="function">
    <text evidence="1">Nucleotidyltransferase involved in the post-translational modification of proteins. It can catalyze the addition of adenosine monophosphate (AMP) or uridine monophosphate (UMP) to a protein, resulting in modifications known as AMPylation and UMPylation.</text>
</comment>
<comment type="catalytic activity">
    <reaction evidence="1">
        <text>L-seryl-[protein] + ATP = 3-O-(5'-adenylyl)-L-seryl-[protein] + diphosphate</text>
        <dbReference type="Rhea" id="RHEA:58120"/>
        <dbReference type="Rhea" id="RHEA-COMP:9863"/>
        <dbReference type="Rhea" id="RHEA-COMP:15073"/>
        <dbReference type="ChEBI" id="CHEBI:29999"/>
        <dbReference type="ChEBI" id="CHEBI:30616"/>
        <dbReference type="ChEBI" id="CHEBI:33019"/>
        <dbReference type="ChEBI" id="CHEBI:142516"/>
        <dbReference type="EC" id="2.7.7.108"/>
    </reaction>
</comment>
<comment type="catalytic activity">
    <reaction evidence="1">
        <text>L-threonyl-[protein] + ATP = 3-O-(5'-adenylyl)-L-threonyl-[protein] + diphosphate</text>
        <dbReference type="Rhea" id="RHEA:54292"/>
        <dbReference type="Rhea" id="RHEA-COMP:11060"/>
        <dbReference type="Rhea" id="RHEA-COMP:13847"/>
        <dbReference type="ChEBI" id="CHEBI:30013"/>
        <dbReference type="ChEBI" id="CHEBI:30616"/>
        <dbReference type="ChEBI" id="CHEBI:33019"/>
        <dbReference type="ChEBI" id="CHEBI:138113"/>
        <dbReference type="EC" id="2.7.7.108"/>
    </reaction>
</comment>
<comment type="catalytic activity">
    <reaction evidence="1">
        <text>L-tyrosyl-[protein] + ATP = O-(5'-adenylyl)-L-tyrosyl-[protein] + diphosphate</text>
        <dbReference type="Rhea" id="RHEA:54288"/>
        <dbReference type="Rhea" id="RHEA-COMP:10136"/>
        <dbReference type="Rhea" id="RHEA-COMP:13846"/>
        <dbReference type="ChEBI" id="CHEBI:30616"/>
        <dbReference type="ChEBI" id="CHEBI:33019"/>
        <dbReference type="ChEBI" id="CHEBI:46858"/>
        <dbReference type="ChEBI" id="CHEBI:83624"/>
        <dbReference type="EC" id="2.7.7.108"/>
    </reaction>
</comment>
<comment type="catalytic activity">
    <reaction evidence="1">
        <text>L-histidyl-[protein] + UTP = N(tele)-(5'-uridylyl)-L-histidyl-[protein] + diphosphate</text>
        <dbReference type="Rhea" id="RHEA:83891"/>
        <dbReference type="Rhea" id="RHEA-COMP:9745"/>
        <dbReference type="Rhea" id="RHEA-COMP:20239"/>
        <dbReference type="ChEBI" id="CHEBI:29979"/>
        <dbReference type="ChEBI" id="CHEBI:33019"/>
        <dbReference type="ChEBI" id="CHEBI:46398"/>
        <dbReference type="ChEBI" id="CHEBI:233474"/>
    </reaction>
</comment>
<comment type="catalytic activity">
    <reaction evidence="1">
        <text>L-seryl-[protein] + UTP = O-(5'-uridylyl)-L-seryl-[protein] + diphosphate</text>
        <dbReference type="Rhea" id="RHEA:64604"/>
        <dbReference type="Rhea" id="RHEA-COMP:9863"/>
        <dbReference type="Rhea" id="RHEA-COMP:16635"/>
        <dbReference type="ChEBI" id="CHEBI:29999"/>
        <dbReference type="ChEBI" id="CHEBI:33019"/>
        <dbReference type="ChEBI" id="CHEBI:46398"/>
        <dbReference type="ChEBI" id="CHEBI:156051"/>
    </reaction>
</comment>
<comment type="catalytic activity">
    <reaction evidence="1">
        <text>L-tyrosyl-[protein] + UTP = O-(5'-uridylyl)-L-tyrosyl-[protein] + diphosphate</text>
        <dbReference type="Rhea" id="RHEA:83887"/>
        <dbReference type="Rhea" id="RHEA-COMP:10136"/>
        <dbReference type="Rhea" id="RHEA-COMP:20238"/>
        <dbReference type="ChEBI" id="CHEBI:33019"/>
        <dbReference type="ChEBI" id="CHEBI:46398"/>
        <dbReference type="ChEBI" id="CHEBI:46858"/>
        <dbReference type="ChEBI" id="CHEBI:90602"/>
    </reaction>
</comment>
<comment type="cofactor">
    <cofactor evidence="1">
        <name>Mg(2+)</name>
        <dbReference type="ChEBI" id="CHEBI:18420"/>
    </cofactor>
    <cofactor evidence="1">
        <name>Mn(2+)</name>
        <dbReference type="ChEBI" id="CHEBI:29035"/>
    </cofactor>
</comment>
<comment type="similarity">
    <text evidence="1">Belongs to the SELO family.</text>
</comment>
<sequence>MKATDNTTTGPGWNFDNSYARLPDYLYTRLDPTPVRAPQMAIFNSSLSDALGLATNTLAGDEGVAIFSGNRIPEGAQPICQAYAGHQFGYFTMLGDGRAHLLGEHITPTGQRFDIQLKGSGRTPFSRSGDGRAVLGPMLREYIISEAMHALGISTTRSLAVVTTGEPVYRETPLPGAILTRVAASHIRVGTFEYLAAQGNRDGIRTLAEYTIHRHFPELLQADNPFLALLQTVLEKQVELVVRWLHVGFIHGVMNTDNMALCGESIDYGPCAFMDSYDPDTVFSSIDQDGRYAFARQPAMAQWNVTRFAETLLPVLHDEGEKAVELANRSLATFPDIFQRLRMDGMRAKLGLFTKEDADMSLMQDLLTCMQQNQADYTNTLRDLALETLPDTPFFREPSFTAWHQRWQTRLTRQEEPVEASRALMRAHNPAFIPRNHRVEEALAAAQERHDFTVLEKLLEVLSRPYDDQPEHAEYRQPPPPSEKPYQTFCGT</sequence>
<reference key="1">
    <citation type="submission" date="2005-10" db="EMBL/GenBank/DDBJ databases">
        <title>Complete sequence of Pelobacter carbinolicus DSM 2380.</title>
        <authorList>
            <person name="Copeland A."/>
            <person name="Lucas S."/>
            <person name="Lapidus A."/>
            <person name="Barry K."/>
            <person name="Detter J.C."/>
            <person name="Glavina T."/>
            <person name="Hammon N."/>
            <person name="Israni S."/>
            <person name="Pitluck S."/>
            <person name="Chertkov O."/>
            <person name="Schmutz J."/>
            <person name="Larimer F."/>
            <person name="Land M."/>
            <person name="Kyrpides N."/>
            <person name="Ivanova N."/>
            <person name="Richardson P."/>
        </authorList>
    </citation>
    <scope>NUCLEOTIDE SEQUENCE [LARGE SCALE GENOMIC DNA]</scope>
    <source>
        <strain>DSM 2380 / NBRC 103641 / GraBd1</strain>
    </source>
</reference>
<accession>Q3A7T7</accession>